<proteinExistence type="inferred from homology"/>
<feature type="chain" id="PRO_0000129005" description="DNA-directed RNA polymerase subunit omega">
    <location>
        <begin position="1"/>
        <end position="70"/>
    </location>
</feature>
<protein>
    <recommendedName>
        <fullName evidence="1">DNA-directed RNA polymerase subunit omega</fullName>
        <shortName evidence="1">RNAP omega subunit</shortName>
        <ecNumber evidence="1">2.7.7.6</ecNumber>
    </recommendedName>
    <alternativeName>
        <fullName evidence="1">RNA polymerase omega subunit</fullName>
    </alternativeName>
    <alternativeName>
        <fullName evidence="1">Transcriptase subunit omega</fullName>
    </alternativeName>
</protein>
<sequence length="70" mass="7961">MILYPSIVDLMEKVDSKYTLCALVAKRARQLVAGDKKLVDIDSDKPVTIATEEVYRGLITYERPQKYGIK</sequence>
<dbReference type="EC" id="2.7.7.6" evidence="1"/>
<dbReference type="EMBL" id="AE008691">
    <property type="protein sequence ID" value="AAM24728.1"/>
    <property type="molecule type" value="Genomic_DNA"/>
</dbReference>
<dbReference type="RefSeq" id="WP_011025767.1">
    <property type="nucleotide sequence ID" value="NZ_JANUCV010000001.1"/>
</dbReference>
<dbReference type="SMR" id="Q8R9S7"/>
<dbReference type="STRING" id="273068.TTE1510"/>
<dbReference type="KEGG" id="tte:TTE1510"/>
<dbReference type="eggNOG" id="COG1758">
    <property type="taxonomic scope" value="Bacteria"/>
</dbReference>
<dbReference type="HOGENOM" id="CLU_125406_6_1_9"/>
<dbReference type="OrthoDB" id="9815459at2"/>
<dbReference type="Proteomes" id="UP000000555">
    <property type="component" value="Chromosome"/>
</dbReference>
<dbReference type="GO" id="GO:0000428">
    <property type="term" value="C:DNA-directed RNA polymerase complex"/>
    <property type="evidence" value="ECO:0007669"/>
    <property type="project" value="UniProtKB-KW"/>
</dbReference>
<dbReference type="GO" id="GO:0003677">
    <property type="term" value="F:DNA binding"/>
    <property type="evidence" value="ECO:0007669"/>
    <property type="project" value="UniProtKB-UniRule"/>
</dbReference>
<dbReference type="GO" id="GO:0003899">
    <property type="term" value="F:DNA-directed RNA polymerase activity"/>
    <property type="evidence" value="ECO:0007669"/>
    <property type="project" value="UniProtKB-UniRule"/>
</dbReference>
<dbReference type="GO" id="GO:0006351">
    <property type="term" value="P:DNA-templated transcription"/>
    <property type="evidence" value="ECO:0007669"/>
    <property type="project" value="UniProtKB-UniRule"/>
</dbReference>
<dbReference type="Gene3D" id="3.90.940.10">
    <property type="match status" value="1"/>
</dbReference>
<dbReference type="HAMAP" id="MF_00366">
    <property type="entry name" value="RNApol_bact_RpoZ"/>
    <property type="match status" value="1"/>
</dbReference>
<dbReference type="InterPro" id="IPR003716">
    <property type="entry name" value="DNA-dir_RNA_pol_omega"/>
</dbReference>
<dbReference type="InterPro" id="IPR006110">
    <property type="entry name" value="Pol_omega/Rpo6/RPB6"/>
</dbReference>
<dbReference type="InterPro" id="IPR036161">
    <property type="entry name" value="RPB6/omega-like_sf"/>
</dbReference>
<dbReference type="NCBIfam" id="TIGR00690">
    <property type="entry name" value="rpoZ"/>
    <property type="match status" value="1"/>
</dbReference>
<dbReference type="PANTHER" id="PTHR34476">
    <property type="entry name" value="DNA-DIRECTED RNA POLYMERASE SUBUNIT OMEGA"/>
    <property type="match status" value="1"/>
</dbReference>
<dbReference type="PANTHER" id="PTHR34476:SF1">
    <property type="entry name" value="DNA-DIRECTED RNA POLYMERASE SUBUNIT OMEGA"/>
    <property type="match status" value="1"/>
</dbReference>
<dbReference type="Pfam" id="PF01192">
    <property type="entry name" value="RNA_pol_Rpb6"/>
    <property type="match status" value="1"/>
</dbReference>
<dbReference type="SMART" id="SM01409">
    <property type="entry name" value="RNA_pol_Rpb6"/>
    <property type="match status" value="1"/>
</dbReference>
<dbReference type="SUPFAM" id="SSF63562">
    <property type="entry name" value="RPB6/omega subunit-like"/>
    <property type="match status" value="1"/>
</dbReference>
<name>RPOZ_CALS4</name>
<evidence type="ECO:0000255" key="1">
    <source>
        <dbReference type="HAMAP-Rule" id="MF_00366"/>
    </source>
</evidence>
<accession>Q8R9S7</accession>
<comment type="function">
    <text evidence="1">Promotes RNA polymerase assembly. Latches the N- and C-terminal regions of the beta' subunit thereby facilitating its interaction with the beta and alpha subunits.</text>
</comment>
<comment type="catalytic activity">
    <reaction evidence="1">
        <text>RNA(n) + a ribonucleoside 5'-triphosphate = RNA(n+1) + diphosphate</text>
        <dbReference type="Rhea" id="RHEA:21248"/>
        <dbReference type="Rhea" id="RHEA-COMP:14527"/>
        <dbReference type="Rhea" id="RHEA-COMP:17342"/>
        <dbReference type="ChEBI" id="CHEBI:33019"/>
        <dbReference type="ChEBI" id="CHEBI:61557"/>
        <dbReference type="ChEBI" id="CHEBI:140395"/>
        <dbReference type="EC" id="2.7.7.6"/>
    </reaction>
</comment>
<comment type="subunit">
    <text evidence="1">The RNAP catalytic core consists of 2 alpha, 1 beta, 1 beta' and 1 omega subunit. When a sigma factor is associated with the core the holoenzyme is formed, which can initiate transcription.</text>
</comment>
<comment type="similarity">
    <text evidence="1">Belongs to the RNA polymerase subunit omega family.</text>
</comment>
<organism>
    <name type="scientific">Caldanaerobacter subterraneus subsp. tengcongensis (strain DSM 15242 / JCM 11007 / NBRC 100824 / MB4)</name>
    <name type="common">Thermoanaerobacter tengcongensis</name>
    <dbReference type="NCBI Taxonomy" id="273068"/>
    <lineage>
        <taxon>Bacteria</taxon>
        <taxon>Bacillati</taxon>
        <taxon>Bacillota</taxon>
        <taxon>Clostridia</taxon>
        <taxon>Thermoanaerobacterales</taxon>
        <taxon>Thermoanaerobacteraceae</taxon>
        <taxon>Caldanaerobacter</taxon>
    </lineage>
</organism>
<reference key="1">
    <citation type="journal article" date="2002" name="Genome Res.">
        <title>A complete sequence of the T. tengcongensis genome.</title>
        <authorList>
            <person name="Bao Q."/>
            <person name="Tian Y."/>
            <person name="Li W."/>
            <person name="Xu Z."/>
            <person name="Xuan Z."/>
            <person name="Hu S."/>
            <person name="Dong W."/>
            <person name="Yang J."/>
            <person name="Chen Y."/>
            <person name="Xue Y."/>
            <person name="Xu Y."/>
            <person name="Lai X."/>
            <person name="Huang L."/>
            <person name="Dong X."/>
            <person name="Ma Y."/>
            <person name="Ling L."/>
            <person name="Tan H."/>
            <person name="Chen R."/>
            <person name="Wang J."/>
            <person name="Yu J."/>
            <person name="Yang H."/>
        </authorList>
    </citation>
    <scope>NUCLEOTIDE SEQUENCE [LARGE SCALE GENOMIC DNA]</scope>
    <source>
        <strain>DSM 15242 / JCM 11007 / NBRC 100824 / MB4</strain>
    </source>
</reference>
<keyword id="KW-0240">DNA-directed RNA polymerase</keyword>
<keyword id="KW-0548">Nucleotidyltransferase</keyword>
<keyword id="KW-1185">Reference proteome</keyword>
<keyword id="KW-0804">Transcription</keyword>
<keyword id="KW-0808">Transferase</keyword>
<gene>
    <name evidence="1" type="primary">rpoZ</name>
    <name type="ordered locus">TTE1510</name>
</gene>